<evidence type="ECO:0000255" key="1">
    <source>
        <dbReference type="HAMAP-Rule" id="MF_01953"/>
    </source>
</evidence>
<reference key="1">
    <citation type="submission" date="2006-06" db="EMBL/GenBank/DDBJ databases">
        <title>Complete sequence of chromosome of Mesorhizobium sp. BNC1.</title>
        <authorList>
            <consortium name="US DOE Joint Genome Institute"/>
            <person name="Copeland A."/>
            <person name="Lucas S."/>
            <person name="Lapidus A."/>
            <person name="Barry K."/>
            <person name="Detter J.C."/>
            <person name="Glavina del Rio T."/>
            <person name="Hammon N."/>
            <person name="Israni S."/>
            <person name="Dalin E."/>
            <person name="Tice H."/>
            <person name="Pitluck S."/>
            <person name="Chertkov O."/>
            <person name="Brettin T."/>
            <person name="Bruce D."/>
            <person name="Han C."/>
            <person name="Tapia R."/>
            <person name="Gilna P."/>
            <person name="Schmutz J."/>
            <person name="Larimer F."/>
            <person name="Land M."/>
            <person name="Hauser L."/>
            <person name="Kyrpides N."/>
            <person name="Mikhailova N."/>
            <person name="Richardson P."/>
        </authorList>
    </citation>
    <scope>NUCLEOTIDE SEQUENCE [LARGE SCALE GENOMIC DNA]</scope>
    <source>
        <strain>BNC1</strain>
    </source>
</reference>
<sequence length="570" mass="60571">MPAKISRAAYADMYGPTTGDKVRLADTELFIEVEKDFTTYGEEVKFGGGKVIRDGMGQSQVSRADGAVDTVITNALVIDVTGIYKADIGLRDGRIAAIGKAGNPDTQPGVNIIVGPGTEAIAGEGKILTAGGFDAHIHFICPQQIEEALMSGLTTMLGGGTGPAHGTLATTCTPGSFHIGRMIQSFDAFPMNIGLAGKGNASLPAPLIEMIKAGACAMKLHEDWGTTPAAIDNCLAVADDHDVQVMIHTDTLNESGFVENTIAAFKGRTIHAFHTEGAGGGHAPDIIKVAGLPNVIPSSTNPTRPYTVNTIAEHLDMLMVCHHLSPSIPEDVAFAESRIRKETIAAEDILHDLGAFSIISSDSQAMGRVGEVIIRTWQTADKMKRQRGKLPEETGDNDNFRVKRYIAKYTINPAIAHGVSKHIGSIEVGKRADLVLWNPAFFGVKPEMILLGGTIAAAPMGDPNASIPTPQPMHYRPMFGAYGKAIAASSVTFVSEAALSDGLQQKLGVEKGMLAVENTRSGIGKKAMVFNDATPHIEVDPETYEVRADGELLTCEPATVLPMAQRYFLF</sequence>
<keyword id="KW-0963">Cytoplasm</keyword>
<keyword id="KW-0378">Hydrolase</keyword>
<keyword id="KW-0479">Metal-binding</keyword>
<keyword id="KW-0533">Nickel</keyword>
<feature type="chain" id="PRO_1000070665" description="Urease subunit alpha">
    <location>
        <begin position="1"/>
        <end position="570"/>
    </location>
</feature>
<feature type="domain" description="Urease" evidence="1">
    <location>
        <begin position="131"/>
        <end position="570"/>
    </location>
</feature>
<feature type="active site" description="Proton donor" evidence="1">
    <location>
        <position position="322"/>
    </location>
</feature>
<feature type="binding site" evidence="1">
    <location>
        <position position="136"/>
    </location>
    <ligand>
        <name>Ni(2+)</name>
        <dbReference type="ChEBI" id="CHEBI:49786"/>
        <label>1</label>
    </ligand>
</feature>
<feature type="binding site" evidence="1">
    <location>
        <position position="138"/>
    </location>
    <ligand>
        <name>Ni(2+)</name>
        <dbReference type="ChEBI" id="CHEBI:49786"/>
        <label>1</label>
    </ligand>
</feature>
<feature type="binding site" description="via carbamate group" evidence="1">
    <location>
        <position position="219"/>
    </location>
    <ligand>
        <name>Ni(2+)</name>
        <dbReference type="ChEBI" id="CHEBI:49786"/>
        <label>1</label>
    </ligand>
</feature>
<feature type="binding site" description="via carbamate group" evidence="1">
    <location>
        <position position="219"/>
    </location>
    <ligand>
        <name>Ni(2+)</name>
        <dbReference type="ChEBI" id="CHEBI:49786"/>
        <label>2</label>
    </ligand>
</feature>
<feature type="binding site" evidence="1">
    <location>
        <position position="221"/>
    </location>
    <ligand>
        <name>substrate</name>
    </ligand>
</feature>
<feature type="binding site" evidence="1">
    <location>
        <position position="248"/>
    </location>
    <ligand>
        <name>Ni(2+)</name>
        <dbReference type="ChEBI" id="CHEBI:49786"/>
        <label>2</label>
    </ligand>
</feature>
<feature type="binding site" evidence="1">
    <location>
        <position position="274"/>
    </location>
    <ligand>
        <name>Ni(2+)</name>
        <dbReference type="ChEBI" id="CHEBI:49786"/>
        <label>2</label>
    </ligand>
</feature>
<feature type="binding site" evidence="1">
    <location>
        <position position="362"/>
    </location>
    <ligand>
        <name>Ni(2+)</name>
        <dbReference type="ChEBI" id="CHEBI:49786"/>
        <label>1</label>
    </ligand>
</feature>
<feature type="modified residue" description="N6-carboxylysine" evidence="1">
    <location>
        <position position="219"/>
    </location>
</feature>
<dbReference type="EC" id="3.5.1.5" evidence="1"/>
<dbReference type="EMBL" id="CP000390">
    <property type="protein sequence ID" value="ABG64061.1"/>
    <property type="molecule type" value="Genomic_DNA"/>
</dbReference>
<dbReference type="SMR" id="Q11EW4"/>
<dbReference type="STRING" id="266779.Meso_2684"/>
<dbReference type="MEROPS" id="M38.982"/>
<dbReference type="KEGG" id="mes:Meso_2684"/>
<dbReference type="eggNOG" id="COG0804">
    <property type="taxonomic scope" value="Bacteria"/>
</dbReference>
<dbReference type="HOGENOM" id="CLU_000980_0_0_5"/>
<dbReference type="OrthoDB" id="9802793at2"/>
<dbReference type="UniPathway" id="UPA00258">
    <property type="reaction ID" value="UER00370"/>
</dbReference>
<dbReference type="GO" id="GO:0005737">
    <property type="term" value="C:cytoplasm"/>
    <property type="evidence" value="ECO:0007669"/>
    <property type="project" value="UniProtKB-SubCell"/>
</dbReference>
<dbReference type="GO" id="GO:0016151">
    <property type="term" value="F:nickel cation binding"/>
    <property type="evidence" value="ECO:0007669"/>
    <property type="project" value="UniProtKB-UniRule"/>
</dbReference>
<dbReference type="GO" id="GO:0009039">
    <property type="term" value="F:urease activity"/>
    <property type="evidence" value="ECO:0007669"/>
    <property type="project" value="UniProtKB-UniRule"/>
</dbReference>
<dbReference type="GO" id="GO:0043419">
    <property type="term" value="P:urea catabolic process"/>
    <property type="evidence" value="ECO:0007669"/>
    <property type="project" value="UniProtKB-UniRule"/>
</dbReference>
<dbReference type="CDD" id="cd00375">
    <property type="entry name" value="Urease_alpha"/>
    <property type="match status" value="1"/>
</dbReference>
<dbReference type="Gene3D" id="3.20.20.140">
    <property type="entry name" value="Metal-dependent hydrolases"/>
    <property type="match status" value="1"/>
</dbReference>
<dbReference type="Gene3D" id="2.30.40.10">
    <property type="entry name" value="Urease, subunit C, domain 1"/>
    <property type="match status" value="1"/>
</dbReference>
<dbReference type="HAMAP" id="MF_01953">
    <property type="entry name" value="Urease_alpha"/>
    <property type="match status" value="1"/>
</dbReference>
<dbReference type="InterPro" id="IPR006680">
    <property type="entry name" value="Amidohydro-rel"/>
</dbReference>
<dbReference type="InterPro" id="IPR011059">
    <property type="entry name" value="Metal-dep_hydrolase_composite"/>
</dbReference>
<dbReference type="InterPro" id="IPR032466">
    <property type="entry name" value="Metal_Hydrolase"/>
</dbReference>
<dbReference type="InterPro" id="IPR011612">
    <property type="entry name" value="Urease_alpha_N_dom"/>
</dbReference>
<dbReference type="InterPro" id="IPR050112">
    <property type="entry name" value="Urease_alpha_subunit"/>
</dbReference>
<dbReference type="InterPro" id="IPR017950">
    <property type="entry name" value="Urease_AS"/>
</dbReference>
<dbReference type="InterPro" id="IPR005848">
    <property type="entry name" value="Urease_asu"/>
</dbReference>
<dbReference type="InterPro" id="IPR017951">
    <property type="entry name" value="Urease_asu_c"/>
</dbReference>
<dbReference type="InterPro" id="IPR029754">
    <property type="entry name" value="Urease_Ni-bd"/>
</dbReference>
<dbReference type="NCBIfam" id="NF009685">
    <property type="entry name" value="PRK13206.1"/>
    <property type="match status" value="1"/>
</dbReference>
<dbReference type="NCBIfam" id="NF009686">
    <property type="entry name" value="PRK13207.1"/>
    <property type="match status" value="1"/>
</dbReference>
<dbReference type="NCBIfam" id="TIGR01792">
    <property type="entry name" value="urease_alph"/>
    <property type="match status" value="1"/>
</dbReference>
<dbReference type="PANTHER" id="PTHR43440">
    <property type="entry name" value="UREASE"/>
    <property type="match status" value="1"/>
</dbReference>
<dbReference type="PANTHER" id="PTHR43440:SF1">
    <property type="entry name" value="UREASE"/>
    <property type="match status" value="1"/>
</dbReference>
<dbReference type="Pfam" id="PF01979">
    <property type="entry name" value="Amidohydro_1"/>
    <property type="match status" value="1"/>
</dbReference>
<dbReference type="Pfam" id="PF00449">
    <property type="entry name" value="Urease_alpha"/>
    <property type="match status" value="1"/>
</dbReference>
<dbReference type="PRINTS" id="PR01752">
    <property type="entry name" value="UREASE"/>
</dbReference>
<dbReference type="SUPFAM" id="SSF51338">
    <property type="entry name" value="Composite domain of metallo-dependent hydrolases"/>
    <property type="match status" value="2"/>
</dbReference>
<dbReference type="SUPFAM" id="SSF51556">
    <property type="entry name" value="Metallo-dependent hydrolases"/>
    <property type="match status" value="1"/>
</dbReference>
<dbReference type="PROSITE" id="PS01120">
    <property type="entry name" value="UREASE_1"/>
    <property type="match status" value="1"/>
</dbReference>
<dbReference type="PROSITE" id="PS00145">
    <property type="entry name" value="UREASE_2"/>
    <property type="match status" value="1"/>
</dbReference>
<dbReference type="PROSITE" id="PS51368">
    <property type="entry name" value="UREASE_3"/>
    <property type="match status" value="1"/>
</dbReference>
<name>URE1_CHESB</name>
<accession>Q11EW4</accession>
<gene>
    <name evidence="1" type="primary">ureC</name>
    <name type="ordered locus">Meso_2684</name>
</gene>
<protein>
    <recommendedName>
        <fullName evidence="1">Urease subunit alpha</fullName>
        <ecNumber evidence="1">3.5.1.5</ecNumber>
    </recommendedName>
    <alternativeName>
        <fullName evidence="1">Urea amidohydrolase subunit alpha</fullName>
    </alternativeName>
</protein>
<organism>
    <name type="scientific">Chelativorans sp. (strain BNC1)</name>
    <dbReference type="NCBI Taxonomy" id="266779"/>
    <lineage>
        <taxon>Bacteria</taxon>
        <taxon>Pseudomonadati</taxon>
        <taxon>Pseudomonadota</taxon>
        <taxon>Alphaproteobacteria</taxon>
        <taxon>Hyphomicrobiales</taxon>
        <taxon>Phyllobacteriaceae</taxon>
        <taxon>Chelativorans</taxon>
    </lineage>
</organism>
<comment type="catalytic activity">
    <reaction evidence="1">
        <text>urea + 2 H2O + H(+) = hydrogencarbonate + 2 NH4(+)</text>
        <dbReference type="Rhea" id="RHEA:20557"/>
        <dbReference type="ChEBI" id="CHEBI:15377"/>
        <dbReference type="ChEBI" id="CHEBI:15378"/>
        <dbReference type="ChEBI" id="CHEBI:16199"/>
        <dbReference type="ChEBI" id="CHEBI:17544"/>
        <dbReference type="ChEBI" id="CHEBI:28938"/>
        <dbReference type="EC" id="3.5.1.5"/>
    </reaction>
</comment>
<comment type="cofactor">
    <cofactor evidence="1">
        <name>Ni cation</name>
        <dbReference type="ChEBI" id="CHEBI:25516"/>
    </cofactor>
    <text evidence="1">Binds 2 nickel ions per subunit.</text>
</comment>
<comment type="pathway">
    <text evidence="1">Nitrogen metabolism; urea degradation; CO(2) and NH(3) from urea (urease route): step 1/1.</text>
</comment>
<comment type="subunit">
    <text evidence="1">Heterotrimer of UreA (gamma), UreB (beta) and UreC (alpha) subunits. Three heterotrimers associate to form the active enzyme.</text>
</comment>
<comment type="subcellular location">
    <subcellularLocation>
        <location evidence="1">Cytoplasm</location>
    </subcellularLocation>
</comment>
<comment type="PTM">
    <text evidence="1">Carboxylation allows a single lysine to coordinate two nickel ions.</text>
</comment>
<comment type="similarity">
    <text evidence="1">Belongs to the metallo-dependent hydrolases superfamily. Urease alpha subunit family.</text>
</comment>
<proteinExistence type="inferred from homology"/>